<accession>B3CT24</accession>
<sequence>MKLNTLFNLNGAKKCSKRIGRGIGSGKGKTCGRGAKGQKSRAKVARGFEGGQTPLIKRLPKRGFKSMNKRNYNIINIITILRLVKANKIEYGAVIDKLLLLKLKMLKKSINKIKLLWANPSSLVLNSEDISLLTKLDLQFNLDEYSISARKNIIKLGMKVINN</sequence>
<evidence type="ECO:0000255" key="1">
    <source>
        <dbReference type="HAMAP-Rule" id="MF_01341"/>
    </source>
</evidence>
<evidence type="ECO:0000305" key="2"/>
<feature type="chain" id="PRO_1000142853" description="Large ribosomal subunit protein uL15">
    <location>
        <begin position="1"/>
        <end position="163"/>
    </location>
</feature>
<name>RL15_ORITI</name>
<comment type="function">
    <text evidence="1">Binds to the 23S rRNA.</text>
</comment>
<comment type="subunit">
    <text evidence="1">Part of the 50S ribosomal subunit.</text>
</comment>
<comment type="similarity">
    <text evidence="1">Belongs to the universal ribosomal protein uL15 family.</text>
</comment>
<dbReference type="EMBL" id="AP008981">
    <property type="protein sequence ID" value="BAG40521.1"/>
    <property type="molecule type" value="Genomic_DNA"/>
</dbReference>
<dbReference type="RefSeq" id="WP_012461624.1">
    <property type="nucleotide sequence ID" value="NC_010793.1"/>
</dbReference>
<dbReference type="SMR" id="B3CT24"/>
<dbReference type="GeneID" id="89459039"/>
<dbReference type="KEGG" id="ott:OTT_1063"/>
<dbReference type="HOGENOM" id="CLU_055188_4_2_5"/>
<dbReference type="OrthoDB" id="9810293at2"/>
<dbReference type="Proteomes" id="UP000001033">
    <property type="component" value="Chromosome"/>
</dbReference>
<dbReference type="GO" id="GO:0022625">
    <property type="term" value="C:cytosolic large ribosomal subunit"/>
    <property type="evidence" value="ECO:0007669"/>
    <property type="project" value="TreeGrafter"/>
</dbReference>
<dbReference type="GO" id="GO:0019843">
    <property type="term" value="F:rRNA binding"/>
    <property type="evidence" value="ECO:0007669"/>
    <property type="project" value="UniProtKB-UniRule"/>
</dbReference>
<dbReference type="GO" id="GO:0003735">
    <property type="term" value="F:structural constituent of ribosome"/>
    <property type="evidence" value="ECO:0007669"/>
    <property type="project" value="InterPro"/>
</dbReference>
<dbReference type="GO" id="GO:0006412">
    <property type="term" value="P:translation"/>
    <property type="evidence" value="ECO:0007669"/>
    <property type="project" value="UniProtKB-UniRule"/>
</dbReference>
<dbReference type="HAMAP" id="MF_01341">
    <property type="entry name" value="Ribosomal_uL15"/>
    <property type="match status" value="1"/>
</dbReference>
<dbReference type="InterPro" id="IPR030878">
    <property type="entry name" value="Ribosomal_uL15"/>
</dbReference>
<dbReference type="InterPro" id="IPR036227">
    <property type="entry name" value="Ribosomal_uL15/eL18_sf"/>
</dbReference>
<dbReference type="InterPro" id="IPR005749">
    <property type="entry name" value="Ribosomal_uL15_bac-type"/>
</dbReference>
<dbReference type="NCBIfam" id="TIGR01071">
    <property type="entry name" value="rplO_bact"/>
    <property type="match status" value="1"/>
</dbReference>
<dbReference type="PANTHER" id="PTHR12934">
    <property type="entry name" value="50S RIBOSOMAL PROTEIN L15"/>
    <property type="match status" value="1"/>
</dbReference>
<dbReference type="PANTHER" id="PTHR12934:SF11">
    <property type="entry name" value="LARGE RIBOSOMAL SUBUNIT PROTEIN UL15M"/>
    <property type="match status" value="1"/>
</dbReference>
<dbReference type="SUPFAM" id="SSF52080">
    <property type="entry name" value="Ribosomal proteins L15p and L18e"/>
    <property type="match status" value="1"/>
</dbReference>
<protein>
    <recommendedName>
        <fullName evidence="1">Large ribosomal subunit protein uL15</fullName>
    </recommendedName>
    <alternativeName>
        <fullName evidence="2">50S ribosomal protein L15</fullName>
    </alternativeName>
</protein>
<organism>
    <name type="scientific">Orientia tsutsugamushi (strain Ikeda)</name>
    <name type="common">Rickettsia tsutsugamushi</name>
    <dbReference type="NCBI Taxonomy" id="334380"/>
    <lineage>
        <taxon>Bacteria</taxon>
        <taxon>Pseudomonadati</taxon>
        <taxon>Pseudomonadota</taxon>
        <taxon>Alphaproteobacteria</taxon>
        <taxon>Rickettsiales</taxon>
        <taxon>Rickettsiaceae</taxon>
        <taxon>Rickettsieae</taxon>
        <taxon>Orientia</taxon>
    </lineage>
</organism>
<reference key="1">
    <citation type="journal article" date="2008" name="DNA Res.">
        <title>The whole-genome sequencing of the obligate intracellular bacterium Orientia tsutsugamushi revealed massive gene amplification during reductive genome evolution.</title>
        <authorList>
            <person name="Nakayama K."/>
            <person name="Yamashita A."/>
            <person name="Kurokawa K."/>
            <person name="Morimoto T."/>
            <person name="Ogawa M."/>
            <person name="Fukuhara M."/>
            <person name="Urakami H."/>
            <person name="Ohnishi M."/>
            <person name="Uchiyama I."/>
            <person name="Ogura Y."/>
            <person name="Ooka T."/>
            <person name="Oshima K."/>
            <person name="Tamura A."/>
            <person name="Hattori M."/>
            <person name="Hayashi T."/>
        </authorList>
    </citation>
    <scope>NUCLEOTIDE SEQUENCE [LARGE SCALE GENOMIC DNA]</scope>
    <source>
        <strain>Ikeda</strain>
    </source>
</reference>
<gene>
    <name evidence="1" type="primary">rplO</name>
    <name type="ordered locus">OTT_1063</name>
</gene>
<keyword id="KW-0687">Ribonucleoprotein</keyword>
<keyword id="KW-0689">Ribosomal protein</keyword>
<keyword id="KW-0694">RNA-binding</keyword>
<keyword id="KW-0699">rRNA-binding</keyword>
<proteinExistence type="inferred from homology"/>